<organism>
    <name type="scientific">Homo sapiens</name>
    <name type="common">Human</name>
    <dbReference type="NCBI Taxonomy" id="9606"/>
    <lineage>
        <taxon>Eukaryota</taxon>
        <taxon>Metazoa</taxon>
        <taxon>Chordata</taxon>
        <taxon>Craniata</taxon>
        <taxon>Vertebrata</taxon>
        <taxon>Euteleostomi</taxon>
        <taxon>Mammalia</taxon>
        <taxon>Eutheria</taxon>
        <taxon>Euarchontoglires</taxon>
        <taxon>Primates</taxon>
        <taxon>Haplorrhini</taxon>
        <taxon>Catarrhini</taxon>
        <taxon>Hominidae</taxon>
        <taxon>Homo</taxon>
    </lineage>
</organism>
<feature type="chain" id="PRO_0000065685" description="Putative transcript Y 12 protein">
    <location>
        <begin position="1"/>
        <end position="90"/>
    </location>
</feature>
<dbReference type="EMBL" id="AF332241">
    <property type="protein sequence ID" value="AAK13491.1"/>
    <property type="molecule type" value="mRNA"/>
</dbReference>
<dbReference type="BioMuta" id="HGNC:18493"/>
<dbReference type="AGR" id="HGNC:18493"/>
<dbReference type="GeneCards" id="TTTY12"/>
<dbReference type="HGNC" id="HGNC:18493">
    <property type="gene designation" value="TTTY12"/>
</dbReference>
<dbReference type="neXtProt" id="NX_Q9BZ98"/>
<dbReference type="InParanoid" id="Q9BZ98"/>
<dbReference type="PAN-GO" id="Q9BZ98">
    <property type="GO annotations" value="0 GO annotations based on evolutionary models"/>
</dbReference>
<dbReference type="Pharos" id="Q9BZ98">
    <property type="development level" value="Tdark"/>
</dbReference>
<dbReference type="Proteomes" id="UP000005640">
    <property type="component" value="Unplaced"/>
</dbReference>
<dbReference type="RNAct" id="Q9BZ98">
    <property type="molecule type" value="protein"/>
</dbReference>
<protein>
    <recommendedName>
        <fullName>Putative transcript Y 12 protein</fullName>
    </recommendedName>
</protein>
<proteinExistence type="uncertain"/>
<comment type="caution">
    <text evidence="1">Could be the product of a pseudogene.</text>
</comment>
<name>TTY12_HUMAN</name>
<accession>Q9BZ98</accession>
<reference key="1">
    <citation type="journal article" date="2003" name="Nature">
        <title>The male-specific region of the human Y chromosome is a mosaic of discrete sequence classes.</title>
        <authorList>
            <person name="Skaletsky H."/>
            <person name="Kuroda-Kawaguchi T."/>
            <person name="Minx P.J."/>
            <person name="Cordum H.S."/>
            <person name="Hillier L.W."/>
            <person name="Brown L.G."/>
            <person name="Repping S."/>
            <person name="Pyntikova T."/>
            <person name="Ali J."/>
            <person name="Bieri T."/>
            <person name="Chinwalla A."/>
            <person name="Delehaunty A."/>
            <person name="Delehaunty K."/>
            <person name="Du H."/>
            <person name="Fewell G."/>
            <person name="Fulton L."/>
            <person name="Fulton R."/>
            <person name="Graves T.A."/>
            <person name="Hou S.-F."/>
            <person name="Latrielle P."/>
            <person name="Leonard S."/>
            <person name="Mardis E."/>
            <person name="Maupin R."/>
            <person name="McPherson J."/>
            <person name="Miner T."/>
            <person name="Nash W."/>
            <person name="Nguyen C."/>
            <person name="Ozersky P."/>
            <person name="Pepin K."/>
            <person name="Rock S."/>
            <person name="Rohlfing T."/>
            <person name="Scott K."/>
            <person name="Schultz B."/>
            <person name="Strong C."/>
            <person name="Tin-Wollam A."/>
            <person name="Yang S.-P."/>
            <person name="Waterston R.H."/>
            <person name="Wilson R.K."/>
            <person name="Rozen S."/>
            <person name="Page D.C."/>
        </authorList>
    </citation>
    <scope>NUCLEOTIDE SEQUENCE [MRNA]</scope>
    <source>
        <tissue>Testis</tissue>
    </source>
</reference>
<gene>
    <name type="primary">TTTY12</name>
    <name type="synonym">TTY12</name>
</gene>
<sequence length="90" mass="10490">MIDPETRHKAFLKAWPWQNSTITFVPGLAICHYSSVQVPRRGAILPMLYALCYVKMPSFQHGPGRMYHLTCDWPRKMSLSCHVCRAHFRD</sequence>
<keyword id="KW-1185">Reference proteome</keyword>
<evidence type="ECO:0000305" key="1"/>